<reference key="1">
    <citation type="journal article" date="2007" name="BMC Microbiol.">
        <title>Subtle genetic changes enhance virulence of methicillin resistant and sensitive Staphylococcus aureus.</title>
        <authorList>
            <person name="Highlander S.K."/>
            <person name="Hulten K.G."/>
            <person name="Qin X."/>
            <person name="Jiang H."/>
            <person name="Yerrapragada S."/>
            <person name="Mason E.O. Jr."/>
            <person name="Shang Y."/>
            <person name="Williams T.M."/>
            <person name="Fortunov R.M."/>
            <person name="Liu Y."/>
            <person name="Igboeli O."/>
            <person name="Petrosino J."/>
            <person name="Tirumalai M."/>
            <person name="Uzman A."/>
            <person name="Fox G.E."/>
            <person name="Cardenas A.M."/>
            <person name="Muzny D.M."/>
            <person name="Hemphill L."/>
            <person name="Ding Y."/>
            <person name="Dugan S."/>
            <person name="Blyth P.R."/>
            <person name="Buhay C.J."/>
            <person name="Dinh H.H."/>
            <person name="Hawes A.C."/>
            <person name="Holder M."/>
            <person name="Kovar C.L."/>
            <person name="Lee S.L."/>
            <person name="Liu W."/>
            <person name="Nazareth L.V."/>
            <person name="Wang Q."/>
            <person name="Zhou J."/>
            <person name="Kaplan S.L."/>
            <person name="Weinstock G.M."/>
        </authorList>
    </citation>
    <scope>NUCLEOTIDE SEQUENCE [LARGE SCALE GENOMIC DNA]</scope>
    <source>
        <strain>USA300 / TCH1516</strain>
    </source>
</reference>
<proteinExistence type="inferred from homology"/>
<gene>
    <name evidence="1" type="primary">leuD</name>
    <name type="ordered locus">USA300HOU_2055</name>
</gene>
<feature type="chain" id="PRO_1000084271" description="3-isopropylmalate dehydratase small subunit">
    <location>
        <begin position="1"/>
        <end position="190"/>
    </location>
</feature>
<sequence>MAAIKPITTYKGKIVPLFNDNIDTDQIIPKVHLKRISKSGFGPFAFDEWRYLPDGSDNPDFNPNKPQYKGASILITGDNFGCGSSREHAAWALKDYGFHIIIAGSFSDIFYMNCTKNAMLPIVLEKSAREHLAQYVEIEVDLPNQTVSSPDKRFHFEIDETWKNKLVNGLDDIAITLQYESLIEKYEKSL</sequence>
<evidence type="ECO:0000255" key="1">
    <source>
        <dbReference type="HAMAP-Rule" id="MF_01031"/>
    </source>
</evidence>
<accession>A8Z4W3</accession>
<organism>
    <name type="scientific">Staphylococcus aureus (strain USA300 / TCH1516)</name>
    <dbReference type="NCBI Taxonomy" id="451516"/>
    <lineage>
        <taxon>Bacteria</taxon>
        <taxon>Bacillati</taxon>
        <taxon>Bacillota</taxon>
        <taxon>Bacilli</taxon>
        <taxon>Bacillales</taxon>
        <taxon>Staphylococcaceae</taxon>
        <taxon>Staphylococcus</taxon>
    </lineage>
</organism>
<comment type="function">
    <text evidence="1">Catalyzes the isomerization between 2-isopropylmalate and 3-isopropylmalate, via the formation of 2-isopropylmaleate.</text>
</comment>
<comment type="catalytic activity">
    <reaction evidence="1">
        <text>(2R,3S)-3-isopropylmalate = (2S)-2-isopropylmalate</text>
        <dbReference type="Rhea" id="RHEA:32287"/>
        <dbReference type="ChEBI" id="CHEBI:1178"/>
        <dbReference type="ChEBI" id="CHEBI:35121"/>
        <dbReference type="EC" id="4.2.1.33"/>
    </reaction>
</comment>
<comment type="pathway">
    <text evidence="1">Amino-acid biosynthesis; L-leucine biosynthesis; L-leucine from 3-methyl-2-oxobutanoate: step 2/4.</text>
</comment>
<comment type="subunit">
    <text evidence="1">Heterodimer of LeuC and LeuD.</text>
</comment>
<comment type="similarity">
    <text evidence="1">Belongs to the LeuD family. LeuD type 1 subfamily.</text>
</comment>
<name>LEUD_STAAT</name>
<dbReference type="EC" id="4.2.1.33" evidence="1"/>
<dbReference type="EMBL" id="CP000730">
    <property type="protein sequence ID" value="ABX30052.1"/>
    <property type="molecule type" value="Genomic_DNA"/>
</dbReference>
<dbReference type="RefSeq" id="WP_000718955.1">
    <property type="nucleotide sequence ID" value="NC_010079.1"/>
</dbReference>
<dbReference type="SMR" id="A8Z4W3"/>
<dbReference type="KEGG" id="sax:USA300HOU_2055"/>
<dbReference type="HOGENOM" id="CLU_081378_0_3_9"/>
<dbReference type="UniPathway" id="UPA00048">
    <property type="reaction ID" value="UER00071"/>
</dbReference>
<dbReference type="GO" id="GO:0009316">
    <property type="term" value="C:3-isopropylmalate dehydratase complex"/>
    <property type="evidence" value="ECO:0007669"/>
    <property type="project" value="InterPro"/>
</dbReference>
<dbReference type="GO" id="GO:0003861">
    <property type="term" value="F:3-isopropylmalate dehydratase activity"/>
    <property type="evidence" value="ECO:0007669"/>
    <property type="project" value="UniProtKB-UniRule"/>
</dbReference>
<dbReference type="GO" id="GO:0009098">
    <property type="term" value="P:L-leucine biosynthetic process"/>
    <property type="evidence" value="ECO:0007669"/>
    <property type="project" value="UniProtKB-UniRule"/>
</dbReference>
<dbReference type="CDD" id="cd01577">
    <property type="entry name" value="IPMI_Swivel"/>
    <property type="match status" value="1"/>
</dbReference>
<dbReference type="FunFam" id="3.20.19.10:FF:000003">
    <property type="entry name" value="3-isopropylmalate dehydratase small subunit"/>
    <property type="match status" value="1"/>
</dbReference>
<dbReference type="Gene3D" id="3.20.19.10">
    <property type="entry name" value="Aconitase, domain 4"/>
    <property type="match status" value="1"/>
</dbReference>
<dbReference type="HAMAP" id="MF_01031">
    <property type="entry name" value="LeuD_type1"/>
    <property type="match status" value="1"/>
</dbReference>
<dbReference type="InterPro" id="IPR004431">
    <property type="entry name" value="3-IsopropMal_deHydase_ssu"/>
</dbReference>
<dbReference type="InterPro" id="IPR015928">
    <property type="entry name" value="Aconitase/3IPM_dehydase_swvl"/>
</dbReference>
<dbReference type="InterPro" id="IPR000573">
    <property type="entry name" value="AconitaseA/IPMdHydase_ssu_swvl"/>
</dbReference>
<dbReference type="InterPro" id="IPR033940">
    <property type="entry name" value="IPMI_Swivel"/>
</dbReference>
<dbReference type="InterPro" id="IPR050075">
    <property type="entry name" value="LeuD"/>
</dbReference>
<dbReference type="NCBIfam" id="TIGR00171">
    <property type="entry name" value="leuD"/>
    <property type="match status" value="1"/>
</dbReference>
<dbReference type="NCBIfam" id="NF002458">
    <property type="entry name" value="PRK01641.1"/>
    <property type="match status" value="1"/>
</dbReference>
<dbReference type="PANTHER" id="PTHR43345:SF5">
    <property type="entry name" value="3-ISOPROPYLMALATE DEHYDRATASE SMALL SUBUNIT"/>
    <property type="match status" value="1"/>
</dbReference>
<dbReference type="PANTHER" id="PTHR43345">
    <property type="entry name" value="3-ISOPROPYLMALATE DEHYDRATASE SMALL SUBUNIT 2-RELATED-RELATED"/>
    <property type="match status" value="1"/>
</dbReference>
<dbReference type="Pfam" id="PF00694">
    <property type="entry name" value="Aconitase_C"/>
    <property type="match status" value="1"/>
</dbReference>
<dbReference type="SUPFAM" id="SSF52016">
    <property type="entry name" value="LeuD/IlvD-like"/>
    <property type="match status" value="1"/>
</dbReference>
<keyword id="KW-0028">Amino-acid biosynthesis</keyword>
<keyword id="KW-0100">Branched-chain amino acid biosynthesis</keyword>
<keyword id="KW-0432">Leucine biosynthesis</keyword>
<keyword id="KW-0456">Lyase</keyword>
<protein>
    <recommendedName>
        <fullName evidence="1">3-isopropylmalate dehydratase small subunit</fullName>
        <ecNumber evidence="1">4.2.1.33</ecNumber>
    </recommendedName>
    <alternativeName>
        <fullName evidence="1">Alpha-IPM isomerase</fullName>
        <shortName evidence="1">IPMI</shortName>
    </alternativeName>
    <alternativeName>
        <fullName evidence="1">Isopropylmalate isomerase</fullName>
    </alternativeName>
</protein>